<comment type="function">
    <text evidence="1">NDH-1 shuttles electrons from NADH, via FMN and iron-sulfur (Fe-S) centers, to quinones in the respiratory chain. The immediate electron acceptor for the enzyme in this species is believed to be ubiquinone. Couples the redox reaction to proton translocation (for every two electrons transferred, four hydrogen ions are translocated across the cytoplasmic membrane), and thus conserves the redox energy in a proton gradient.</text>
</comment>
<comment type="catalytic activity">
    <reaction evidence="1">
        <text>a quinone + NADH + 5 H(+)(in) = a quinol + NAD(+) + 4 H(+)(out)</text>
        <dbReference type="Rhea" id="RHEA:57888"/>
        <dbReference type="ChEBI" id="CHEBI:15378"/>
        <dbReference type="ChEBI" id="CHEBI:24646"/>
        <dbReference type="ChEBI" id="CHEBI:57540"/>
        <dbReference type="ChEBI" id="CHEBI:57945"/>
        <dbReference type="ChEBI" id="CHEBI:132124"/>
    </reaction>
</comment>
<comment type="cofactor">
    <cofactor evidence="1">
        <name>[4Fe-4S] cluster</name>
        <dbReference type="ChEBI" id="CHEBI:49883"/>
    </cofactor>
    <text evidence="1">Binds 1 [4Fe-4S] cluster.</text>
</comment>
<comment type="subunit">
    <text evidence="1">NDH-1 is composed of 14 different subunits. Subunits NuoB, C, D, E, F, and G constitute the peripheral sector of the complex.</text>
</comment>
<comment type="subcellular location">
    <subcellularLocation>
        <location evidence="1">Cell inner membrane</location>
        <topology evidence="1">Peripheral membrane protein</topology>
        <orientation evidence="1">Cytoplasmic side</orientation>
    </subcellularLocation>
</comment>
<comment type="similarity">
    <text evidence="1">Belongs to the complex I 20 kDa subunit family.</text>
</comment>
<sequence>MKYTLTRIDPNAPIERYPAEKKQTVNDPLQEVGRGILLGKLENVLNSTVNWGRKNSLWPYNFGISCCYVEMTTAFTAVHDVARFGAEVIRASPRQADFMVIAGTPFIKMAPVIQRLYEQLLEPKWVISMGACANSGGMYDIYSVVQGVDKFLPVDVYIPGCPPRPEAFLQALLLLQKSIGEERRPLSWVVGDQGVYRAQMPCEKDLFREERIAVTNLPTPDKL</sequence>
<organism>
    <name type="scientific">Tolumonas auensis (strain DSM 9187 / NBRC 110442 / TA 4)</name>
    <dbReference type="NCBI Taxonomy" id="595494"/>
    <lineage>
        <taxon>Bacteria</taxon>
        <taxon>Pseudomonadati</taxon>
        <taxon>Pseudomonadota</taxon>
        <taxon>Gammaproteobacteria</taxon>
        <taxon>Aeromonadales</taxon>
        <taxon>Aeromonadaceae</taxon>
        <taxon>Tolumonas</taxon>
    </lineage>
</organism>
<gene>
    <name evidence="1" type="primary">nuoB</name>
    <name type="ordered locus">Tola_2641</name>
</gene>
<proteinExistence type="inferred from homology"/>
<accession>C4LB32</accession>
<keyword id="KW-0004">4Fe-4S</keyword>
<keyword id="KW-0997">Cell inner membrane</keyword>
<keyword id="KW-1003">Cell membrane</keyword>
<keyword id="KW-0408">Iron</keyword>
<keyword id="KW-0411">Iron-sulfur</keyword>
<keyword id="KW-0472">Membrane</keyword>
<keyword id="KW-0479">Metal-binding</keyword>
<keyword id="KW-0520">NAD</keyword>
<keyword id="KW-0874">Quinone</keyword>
<keyword id="KW-1185">Reference proteome</keyword>
<keyword id="KW-1278">Translocase</keyword>
<keyword id="KW-0813">Transport</keyword>
<keyword id="KW-0830">Ubiquinone</keyword>
<reference key="1">
    <citation type="submission" date="2009-05" db="EMBL/GenBank/DDBJ databases">
        <title>Complete sequence of Tolumonas auensis DSM 9187.</title>
        <authorList>
            <consortium name="US DOE Joint Genome Institute"/>
            <person name="Lucas S."/>
            <person name="Copeland A."/>
            <person name="Lapidus A."/>
            <person name="Glavina del Rio T."/>
            <person name="Tice H."/>
            <person name="Bruce D."/>
            <person name="Goodwin L."/>
            <person name="Pitluck S."/>
            <person name="Chertkov O."/>
            <person name="Brettin T."/>
            <person name="Detter J.C."/>
            <person name="Han C."/>
            <person name="Larimer F."/>
            <person name="Land M."/>
            <person name="Hauser L."/>
            <person name="Kyrpides N."/>
            <person name="Mikhailova N."/>
            <person name="Spring S."/>
            <person name="Beller H."/>
        </authorList>
    </citation>
    <scope>NUCLEOTIDE SEQUENCE [LARGE SCALE GENOMIC DNA]</scope>
    <source>
        <strain>DSM 9187 / NBRC 110442 / TA 4</strain>
    </source>
</reference>
<feature type="chain" id="PRO_1000214867" description="NADH-quinone oxidoreductase subunit B">
    <location>
        <begin position="1"/>
        <end position="223"/>
    </location>
</feature>
<feature type="binding site" evidence="1">
    <location>
        <position position="66"/>
    </location>
    <ligand>
        <name>[4Fe-4S] cluster</name>
        <dbReference type="ChEBI" id="CHEBI:49883"/>
    </ligand>
</feature>
<feature type="binding site" evidence="1">
    <location>
        <position position="67"/>
    </location>
    <ligand>
        <name>[4Fe-4S] cluster</name>
        <dbReference type="ChEBI" id="CHEBI:49883"/>
    </ligand>
</feature>
<feature type="binding site" evidence="1">
    <location>
        <position position="132"/>
    </location>
    <ligand>
        <name>[4Fe-4S] cluster</name>
        <dbReference type="ChEBI" id="CHEBI:49883"/>
    </ligand>
</feature>
<feature type="binding site" evidence="1">
    <location>
        <position position="161"/>
    </location>
    <ligand>
        <name>[4Fe-4S] cluster</name>
        <dbReference type="ChEBI" id="CHEBI:49883"/>
    </ligand>
</feature>
<name>NUOB_TOLAT</name>
<evidence type="ECO:0000255" key="1">
    <source>
        <dbReference type="HAMAP-Rule" id="MF_01356"/>
    </source>
</evidence>
<dbReference type="EC" id="7.1.1.-" evidence="1"/>
<dbReference type="EMBL" id="CP001616">
    <property type="protein sequence ID" value="ACQ94235.1"/>
    <property type="molecule type" value="Genomic_DNA"/>
</dbReference>
<dbReference type="RefSeq" id="WP_015879684.1">
    <property type="nucleotide sequence ID" value="NC_012691.1"/>
</dbReference>
<dbReference type="SMR" id="C4LB32"/>
<dbReference type="STRING" id="595494.Tola_2641"/>
<dbReference type="KEGG" id="tau:Tola_2641"/>
<dbReference type="eggNOG" id="COG0377">
    <property type="taxonomic scope" value="Bacteria"/>
</dbReference>
<dbReference type="HOGENOM" id="CLU_055737_7_3_6"/>
<dbReference type="OrthoDB" id="9786737at2"/>
<dbReference type="Proteomes" id="UP000009073">
    <property type="component" value="Chromosome"/>
</dbReference>
<dbReference type="GO" id="GO:0005886">
    <property type="term" value="C:plasma membrane"/>
    <property type="evidence" value="ECO:0007669"/>
    <property type="project" value="UniProtKB-SubCell"/>
</dbReference>
<dbReference type="GO" id="GO:0045271">
    <property type="term" value="C:respiratory chain complex I"/>
    <property type="evidence" value="ECO:0007669"/>
    <property type="project" value="TreeGrafter"/>
</dbReference>
<dbReference type="GO" id="GO:0051539">
    <property type="term" value="F:4 iron, 4 sulfur cluster binding"/>
    <property type="evidence" value="ECO:0007669"/>
    <property type="project" value="UniProtKB-KW"/>
</dbReference>
<dbReference type="GO" id="GO:0005506">
    <property type="term" value="F:iron ion binding"/>
    <property type="evidence" value="ECO:0007669"/>
    <property type="project" value="UniProtKB-UniRule"/>
</dbReference>
<dbReference type="GO" id="GO:0008137">
    <property type="term" value="F:NADH dehydrogenase (ubiquinone) activity"/>
    <property type="evidence" value="ECO:0007669"/>
    <property type="project" value="InterPro"/>
</dbReference>
<dbReference type="GO" id="GO:0050136">
    <property type="term" value="F:NADH:ubiquinone reductase (non-electrogenic) activity"/>
    <property type="evidence" value="ECO:0007669"/>
    <property type="project" value="UniProtKB-UniRule"/>
</dbReference>
<dbReference type="GO" id="GO:0048038">
    <property type="term" value="F:quinone binding"/>
    <property type="evidence" value="ECO:0007669"/>
    <property type="project" value="UniProtKB-KW"/>
</dbReference>
<dbReference type="GO" id="GO:0009060">
    <property type="term" value="P:aerobic respiration"/>
    <property type="evidence" value="ECO:0007669"/>
    <property type="project" value="TreeGrafter"/>
</dbReference>
<dbReference type="GO" id="GO:0015990">
    <property type="term" value="P:electron transport coupled proton transport"/>
    <property type="evidence" value="ECO:0007669"/>
    <property type="project" value="TreeGrafter"/>
</dbReference>
<dbReference type="FunFam" id="3.40.50.12280:FF:000002">
    <property type="entry name" value="NADH-quinone oxidoreductase subunit B"/>
    <property type="match status" value="1"/>
</dbReference>
<dbReference type="Gene3D" id="3.40.50.12280">
    <property type="match status" value="1"/>
</dbReference>
<dbReference type="HAMAP" id="MF_01356">
    <property type="entry name" value="NDH1_NuoB"/>
    <property type="match status" value="1"/>
</dbReference>
<dbReference type="InterPro" id="IPR006137">
    <property type="entry name" value="NADH_UbQ_OxRdtase-like_20kDa"/>
</dbReference>
<dbReference type="InterPro" id="IPR006138">
    <property type="entry name" value="NADH_UQ_OxRdtase_20Kd_su"/>
</dbReference>
<dbReference type="NCBIfam" id="TIGR01957">
    <property type="entry name" value="nuoB_fam"/>
    <property type="match status" value="1"/>
</dbReference>
<dbReference type="NCBIfam" id="NF005012">
    <property type="entry name" value="PRK06411.1"/>
    <property type="match status" value="1"/>
</dbReference>
<dbReference type="PANTHER" id="PTHR11995">
    <property type="entry name" value="NADH DEHYDROGENASE"/>
    <property type="match status" value="1"/>
</dbReference>
<dbReference type="PANTHER" id="PTHR11995:SF14">
    <property type="entry name" value="NADH DEHYDROGENASE [UBIQUINONE] IRON-SULFUR PROTEIN 7, MITOCHONDRIAL"/>
    <property type="match status" value="1"/>
</dbReference>
<dbReference type="Pfam" id="PF01058">
    <property type="entry name" value="Oxidored_q6"/>
    <property type="match status" value="1"/>
</dbReference>
<dbReference type="SUPFAM" id="SSF56770">
    <property type="entry name" value="HydA/Nqo6-like"/>
    <property type="match status" value="1"/>
</dbReference>
<dbReference type="PROSITE" id="PS01150">
    <property type="entry name" value="COMPLEX1_20K"/>
    <property type="match status" value="1"/>
</dbReference>
<protein>
    <recommendedName>
        <fullName evidence="1">NADH-quinone oxidoreductase subunit B</fullName>
        <ecNumber evidence="1">7.1.1.-</ecNumber>
    </recommendedName>
    <alternativeName>
        <fullName evidence="1">NADH dehydrogenase I subunit B</fullName>
    </alternativeName>
    <alternativeName>
        <fullName evidence="1">NDH-1 subunit B</fullName>
    </alternativeName>
</protein>